<protein>
    <recommendedName>
        <fullName>RNA silencing suppressor p19</fullName>
    </recommendedName>
    <alternativeName>
        <fullName>19 kDa symptom severity modulator</fullName>
    </alternativeName>
</protein>
<sequence>MERAIQGNDAREQANSERWDGGSGGTTSPFKLPDESPSWTEWRLHNDETNSNQDNPLGFKESWGFGKVVFKRYLRYDRTEASLHRVLGSWTGDSVNYAASRFFGFDQIGCTYSIRFRGVSITVSGGSRTLQHLCEMAIRSKQELLQLAPIEVESNVSRGCPEGTQTFEKEGE</sequence>
<gene>
    <name type="ORF">ORF4</name>
</gene>
<reference key="1">
    <citation type="journal article" date="1996" name="Phytopathology">
        <title>Different tomato bushy stunt virus strains cause disease outbreaks on solanaceous crops in Spain.</title>
        <authorList>
            <person name="Luis-Areteaga M."/>
            <person name="Rodriguez-Cerezo E."/>
            <person name="Fraile A."/>
            <person name="Saez E."/>
            <person name="Garcia-Arenal F."/>
        </authorList>
        <dbReference type="AGRICOLA" id="IND20581771"/>
    </citation>
    <scope>NUCLEOTIDE SEQUENCE [GENOMIC RNA]</scope>
</reference>
<feature type="chain" id="PRO_0000222883" description="RNA silencing suppressor p19">
    <location>
        <begin position="1"/>
        <end position="172"/>
    </location>
</feature>
<feature type="region of interest" description="Disordered" evidence="2">
    <location>
        <begin position="1"/>
        <end position="37"/>
    </location>
</feature>
<feature type="compositionally biased region" description="Basic and acidic residues" evidence="2">
    <location>
        <begin position="1"/>
        <end position="20"/>
    </location>
</feature>
<feature type="strand" evidence="6">
    <location>
        <begin position="29"/>
        <end position="32"/>
    </location>
</feature>
<feature type="helix" evidence="4">
    <location>
        <begin position="39"/>
        <end position="48"/>
    </location>
</feature>
<feature type="turn" evidence="5">
    <location>
        <begin position="52"/>
        <end position="54"/>
    </location>
</feature>
<feature type="strand" evidence="4">
    <location>
        <begin position="57"/>
        <end position="65"/>
    </location>
</feature>
<feature type="strand" evidence="4">
    <location>
        <begin position="68"/>
        <end position="75"/>
    </location>
</feature>
<feature type="helix" evidence="4">
    <location>
        <begin position="80"/>
        <end position="87"/>
    </location>
</feature>
<feature type="helix" evidence="4">
    <location>
        <begin position="92"/>
        <end position="100"/>
    </location>
</feature>
<feature type="strand" evidence="4">
    <location>
        <begin position="104"/>
        <end position="106"/>
    </location>
</feature>
<feature type="strand" evidence="4">
    <location>
        <begin position="109"/>
        <end position="116"/>
    </location>
</feature>
<feature type="strand" evidence="4">
    <location>
        <begin position="119"/>
        <end position="126"/>
    </location>
</feature>
<feature type="helix" evidence="4">
    <location>
        <begin position="127"/>
        <end position="129"/>
    </location>
</feature>
<feature type="helix" evidence="4">
    <location>
        <begin position="130"/>
        <end position="146"/>
    </location>
</feature>
<keyword id="KW-0002">3D-structure</keyword>
<keyword id="KW-0945">Host-virus interaction</keyword>
<keyword id="KW-1090">Inhibition of host innate immune response by virus</keyword>
<keyword id="KW-0694">RNA-binding</keyword>
<keyword id="KW-0941">Suppressor of RNA silencing</keyword>
<keyword id="KW-0899">Viral immunoevasion</keyword>
<name>P19_TBSVK</name>
<organism>
    <name type="scientific">Tomato bushy stunt virus (strain Ja9)</name>
    <name type="common">TBSV</name>
    <dbReference type="NCBI Taxonomy" id="70158"/>
    <lineage>
        <taxon>Viruses</taxon>
        <taxon>Riboviria</taxon>
        <taxon>Orthornavirae</taxon>
        <taxon>Kitrinoviricota</taxon>
        <taxon>Tolucaviricetes</taxon>
        <taxon>Tolivirales</taxon>
        <taxon>Tombusviridae</taxon>
        <taxon>Procedovirinae</taxon>
        <taxon>Tombusvirus</taxon>
        <taxon>Tombusvirus lycopersici</taxon>
    </lineage>
</organism>
<accession>P69517</accession>
<accession>P50627</accession>
<organismHost>
    <name type="scientific">Capsicum annuum</name>
    <name type="common">Capsicum pepper</name>
    <dbReference type="NCBI Taxonomy" id="4072"/>
</organismHost>
<organismHost>
    <name type="scientific">Malus</name>
    <dbReference type="NCBI Taxonomy" id="3749"/>
</organismHost>
<organismHost>
    <name type="scientific">Pyrus</name>
    <name type="common">pears</name>
    <dbReference type="NCBI Taxonomy" id="3766"/>
</organismHost>
<organismHost>
    <name type="scientific">Solanum lycopersicum</name>
    <name type="common">Tomato</name>
    <name type="synonym">Lycopersicon esculentum</name>
    <dbReference type="NCBI Taxonomy" id="4081"/>
</organismHost>
<organismHost>
    <name type="scientific">Solanum melongena</name>
    <name type="common">eggplant</name>
    <dbReference type="NCBI Taxonomy" id="4111"/>
</organismHost>
<organismHost>
    <name type="scientific">Tolmiea menziesii</name>
    <dbReference type="NCBI Taxonomy" id="29777"/>
</organismHost>
<organismHost>
    <name type="scientific">Tulipa</name>
    <dbReference type="NCBI Taxonomy" id="13305"/>
</organismHost>
<comment type="function">
    <text evidence="1">Viral suppressor of RNA silencing which binds specifically to silencing RNAs (siRNAs). Acts as a molecular caliper to specifically select siRNAs based on the length of the duplex region of the RNA (By similarity).</text>
</comment>
<comment type="subunit">
    <text evidence="1">Homodimer.</text>
</comment>
<comment type="similarity">
    <text evidence="3">Belongs to the tombusvirus protein p19 family.</text>
</comment>
<dbReference type="EMBL" id="Z68898">
    <property type="protein sequence ID" value="CAA93130.1"/>
    <property type="molecule type" value="Genomic_RNA"/>
</dbReference>
<dbReference type="PDB" id="4J39">
    <property type="method" value="X-ray"/>
    <property type="resolution" value="1.70 A"/>
    <property type="chains" value="A=27-149"/>
</dbReference>
<dbReference type="PDB" id="4J5V">
    <property type="method" value="X-ray"/>
    <property type="resolution" value="2.15 A"/>
    <property type="chains" value="A=27-149"/>
</dbReference>
<dbReference type="PDB" id="4JGN">
    <property type="method" value="X-ray"/>
    <property type="resolution" value="1.86 A"/>
    <property type="chains" value="A=27-149"/>
</dbReference>
<dbReference type="PDB" id="4JK0">
    <property type="method" value="X-ray"/>
    <property type="resolution" value="2.30 A"/>
    <property type="chains" value="D=27-149"/>
</dbReference>
<dbReference type="PDB" id="4JNX">
    <property type="method" value="X-ray"/>
    <property type="resolution" value="1.95 A"/>
    <property type="chains" value="A/D=27-149"/>
</dbReference>
<dbReference type="PDB" id="4KNQ">
    <property type="method" value="X-ray"/>
    <property type="resolution" value="1.82 A"/>
    <property type="chains" value="A=27-149"/>
</dbReference>
<dbReference type="PDB" id="4KQ0">
    <property type="method" value="X-ray"/>
    <property type="resolution" value="2.10 A"/>
    <property type="chains" value="A/D=27-157"/>
</dbReference>
<dbReference type="PDB" id="4KTG">
    <property type="method" value="X-ray"/>
    <property type="resolution" value="1.92 A"/>
    <property type="chains" value="A=27-149"/>
</dbReference>
<dbReference type="PDBsum" id="4J39"/>
<dbReference type="PDBsum" id="4J5V"/>
<dbReference type="PDBsum" id="4JGN"/>
<dbReference type="PDBsum" id="4JK0"/>
<dbReference type="PDBsum" id="4JNX"/>
<dbReference type="PDBsum" id="4KNQ"/>
<dbReference type="PDBsum" id="4KQ0"/>
<dbReference type="PDBsum" id="4KTG"/>
<dbReference type="SMR" id="P69517"/>
<dbReference type="EvolutionaryTrace" id="P69517"/>
<dbReference type="GO" id="GO:0044423">
    <property type="term" value="C:virion component"/>
    <property type="evidence" value="ECO:0007669"/>
    <property type="project" value="InterPro"/>
</dbReference>
<dbReference type="GO" id="GO:0003723">
    <property type="term" value="F:RNA binding"/>
    <property type="evidence" value="ECO:0007669"/>
    <property type="project" value="UniProtKB-KW"/>
</dbReference>
<dbReference type="GO" id="GO:0052170">
    <property type="term" value="P:symbiont-mediated suppression of host innate immune response"/>
    <property type="evidence" value="ECO:0007669"/>
    <property type="project" value="UniProtKB-KW"/>
</dbReference>
<dbReference type="Gene3D" id="3.30.390.180">
    <property type="entry name" value="RNA silencing suppressor P19"/>
    <property type="match status" value="1"/>
</dbReference>
<dbReference type="InterPro" id="IPR004905">
    <property type="entry name" value="Tombusvirus_p19"/>
</dbReference>
<dbReference type="InterPro" id="IPR036131">
    <property type="entry name" value="VP19_sf"/>
</dbReference>
<dbReference type="Pfam" id="PF03220">
    <property type="entry name" value="Tombus_P19"/>
    <property type="match status" value="1"/>
</dbReference>
<dbReference type="SUPFAM" id="SSF103145">
    <property type="entry name" value="Tombusvirus P19 core protein, VP19"/>
    <property type="match status" value="1"/>
</dbReference>
<proteinExistence type="evidence at protein level"/>
<evidence type="ECO:0000250" key="1"/>
<evidence type="ECO:0000256" key="2">
    <source>
        <dbReference type="SAM" id="MobiDB-lite"/>
    </source>
</evidence>
<evidence type="ECO:0000305" key="3"/>
<evidence type="ECO:0007829" key="4">
    <source>
        <dbReference type="PDB" id="4J39"/>
    </source>
</evidence>
<evidence type="ECO:0007829" key="5">
    <source>
        <dbReference type="PDB" id="4JGN"/>
    </source>
</evidence>
<evidence type="ECO:0007829" key="6">
    <source>
        <dbReference type="PDB" id="4JK0"/>
    </source>
</evidence>